<gene>
    <name evidence="1" type="primary">serC</name>
    <name type="ordered locus">Ent638_1427</name>
</gene>
<evidence type="ECO:0000255" key="1">
    <source>
        <dbReference type="HAMAP-Rule" id="MF_00160"/>
    </source>
</evidence>
<keyword id="KW-0028">Amino-acid biosynthesis</keyword>
<keyword id="KW-0032">Aminotransferase</keyword>
<keyword id="KW-0963">Cytoplasm</keyword>
<keyword id="KW-0663">Pyridoxal phosphate</keyword>
<keyword id="KW-0664">Pyridoxine biosynthesis</keyword>
<keyword id="KW-0718">Serine biosynthesis</keyword>
<keyword id="KW-0808">Transferase</keyword>
<organism>
    <name type="scientific">Enterobacter sp. (strain 638)</name>
    <dbReference type="NCBI Taxonomy" id="399742"/>
    <lineage>
        <taxon>Bacteria</taxon>
        <taxon>Pseudomonadati</taxon>
        <taxon>Pseudomonadota</taxon>
        <taxon>Gammaproteobacteria</taxon>
        <taxon>Enterobacterales</taxon>
        <taxon>Enterobacteriaceae</taxon>
        <taxon>Enterobacter</taxon>
    </lineage>
</organism>
<proteinExistence type="inferred from homology"/>
<accession>A4W8S7</accession>
<dbReference type="EC" id="2.6.1.52" evidence="1"/>
<dbReference type="EMBL" id="CP000653">
    <property type="protein sequence ID" value="ABP60107.1"/>
    <property type="molecule type" value="Genomic_DNA"/>
</dbReference>
<dbReference type="RefSeq" id="WP_012016824.1">
    <property type="nucleotide sequence ID" value="NC_009436.1"/>
</dbReference>
<dbReference type="SMR" id="A4W8S7"/>
<dbReference type="STRING" id="399742.Ent638_1427"/>
<dbReference type="KEGG" id="ent:Ent638_1427"/>
<dbReference type="eggNOG" id="COG1932">
    <property type="taxonomic scope" value="Bacteria"/>
</dbReference>
<dbReference type="HOGENOM" id="CLU_034866_0_2_6"/>
<dbReference type="OrthoDB" id="9809412at2"/>
<dbReference type="UniPathway" id="UPA00135">
    <property type="reaction ID" value="UER00197"/>
</dbReference>
<dbReference type="UniPathway" id="UPA00244">
    <property type="reaction ID" value="UER00311"/>
</dbReference>
<dbReference type="Proteomes" id="UP000000230">
    <property type="component" value="Chromosome"/>
</dbReference>
<dbReference type="GO" id="GO:0005737">
    <property type="term" value="C:cytoplasm"/>
    <property type="evidence" value="ECO:0007669"/>
    <property type="project" value="UniProtKB-SubCell"/>
</dbReference>
<dbReference type="GO" id="GO:0004648">
    <property type="term" value="F:O-phospho-L-serine:2-oxoglutarate aminotransferase activity"/>
    <property type="evidence" value="ECO:0007669"/>
    <property type="project" value="UniProtKB-UniRule"/>
</dbReference>
<dbReference type="GO" id="GO:0030170">
    <property type="term" value="F:pyridoxal phosphate binding"/>
    <property type="evidence" value="ECO:0007669"/>
    <property type="project" value="UniProtKB-UniRule"/>
</dbReference>
<dbReference type="GO" id="GO:0006564">
    <property type="term" value="P:L-serine biosynthetic process"/>
    <property type="evidence" value="ECO:0007669"/>
    <property type="project" value="UniProtKB-UniRule"/>
</dbReference>
<dbReference type="GO" id="GO:0008615">
    <property type="term" value="P:pyridoxine biosynthetic process"/>
    <property type="evidence" value="ECO:0007669"/>
    <property type="project" value="UniProtKB-UniRule"/>
</dbReference>
<dbReference type="CDD" id="cd00611">
    <property type="entry name" value="PSAT_like"/>
    <property type="match status" value="1"/>
</dbReference>
<dbReference type="FunFam" id="3.40.640.10:FF:000010">
    <property type="entry name" value="Phosphoserine aminotransferase"/>
    <property type="match status" value="1"/>
</dbReference>
<dbReference type="FunFam" id="3.90.1150.10:FF:000006">
    <property type="entry name" value="Phosphoserine aminotransferase"/>
    <property type="match status" value="1"/>
</dbReference>
<dbReference type="Gene3D" id="3.90.1150.10">
    <property type="entry name" value="Aspartate Aminotransferase, domain 1"/>
    <property type="match status" value="1"/>
</dbReference>
<dbReference type="Gene3D" id="3.40.640.10">
    <property type="entry name" value="Type I PLP-dependent aspartate aminotransferase-like (Major domain)"/>
    <property type="match status" value="1"/>
</dbReference>
<dbReference type="HAMAP" id="MF_00160">
    <property type="entry name" value="SerC_aminotrans_5"/>
    <property type="match status" value="1"/>
</dbReference>
<dbReference type="InterPro" id="IPR000192">
    <property type="entry name" value="Aminotrans_V_dom"/>
</dbReference>
<dbReference type="InterPro" id="IPR020578">
    <property type="entry name" value="Aminotrans_V_PyrdxlP_BS"/>
</dbReference>
<dbReference type="InterPro" id="IPR022278">
    <property type="entry name" value="Pser_aminoTfrase"/>
</dbReference>
<dbReference type="InterPro" id="IPR015424">
    <property type="entry name" value="PyrdxlP-dep_Trfase"/>
</dbReference>
<dbReference type="InterPro" id="IPR015421">
    <property type="entry name" value="PyrdxlP-dep_Trfase_major"/>
</dbReference>
<dbReference type="InterPro" id="IPR015422">
    <property type="entry name" value="PyrdxlP-dep_Trfase_small"/>
</dbReference>
<dbReference type="NCBIfam" id="NF003764">
    <property type="entry name" value="PRK05355.1"/>
    <property type="match status" value="1"/>
</dbReference>
<dbReference type="NCBIfam" id="TIGR01364">
    <property type="entry name" value="serC_1"/>
    <property type="match status" value="1"/>
</dbReference>
<dbReference type="PANTHER" id="PTHR43247">
    <property type="entry name" value="PHOSPHOSERINE AMINOTRANSFERASE"/>
    <property type="match status" value="1"/>
</dbReference>
<dbReference type="PANTHER" id="PTHR43247:SF1">
    <property type="entry name" value="PHOSPHOSERINE AMINOTRANSFERASE"/>
    <property type="match status" value="1"/>
</dbReference>
<dbReference type="Pfam" id="PF00266">
    <property type="entry name" value="Aminotran_5"/>
    <property type="match status" value="1"/>
</dbReference>
<dbReference type="PIRSF" id="PIRSF000525">
    <property type="entry name" value="SerC"/>
    <property type="match status" value="1"/>
</dbReference>
<dbReference type="SUPFAM" id="SSF53383">
    <property type="entry name" value="PLP-dependent transferases"/>
    <property type="match status" value="1"/>
</dbReference>
<dbReference type="PROSITE" id="PS00595">
    <property type="entry name" value="AA_TRANSFER_CLASS_5"/>
    <property type="match status" value="1"/>
</dbReference>
<name>SERC_ENT38</name>
<feature type="chain" id="PRO_1000203536" description="Phosphoserine aminotransferase">
    <location>
        <begin position="1"/>
        <end position="362"/>
    </location>
</feature>
<feature type="binding site" evidence="1">
    <location>
        <position position="9"/>
    </location>
    <ligand>
        <name>L-glutamate</name>
        <dbReference type="ChEBI" id="CHEBI:29985"/>
    </ligand>
</feature>
<feature type="binding site" evidence="1">
    <location>
        <position position="42"/>
    </location>
    <ligand>
        <name>L-glutamate</name>
        <dbReference type="ChEBI" id="CHEBI:29985"/>
    </ligand>
</feature>
<feature type="binding site" evidence="1">
    <location>
        <begin position="76"/>
        <end position="77"/>
    </location>
    <ligand>
        <name>pyridoxal 5'-phosphate</name>
        <dbReference type="ChEBI" id="CHEBI:597326"/>
    </ligand>
</feature>
<feature type="binding site" evidence="1">
    <location>
        <position position="102"/>
    </location>
    <ligand>
        <name>pyridoxal 5'-phosphate</name>
        <dbReference type="ChEBI" id="CHEBI:597326"/>
    </ligand>
</feature>
<feature type="binding site" evidence="1">
    <location>
        <position position="153"/>
    </location>
    <ligand>
        <name>pyridoxal 5'-phosphate</name>
        <dbReference type="ChEBI" id="CHEBI:597326"/>
    </ligand>
</feature>
<feature type="binding site" evidence="1">
    <location>
        <position position="174"/>
    </location>
    <ligand>
        <name>pyridoxal 5'-phosphate</name>
        <dbReference type="ChEBI" id="CHEBI:597326"/>
    </ligand>
</feature>
<feature type="binding site" evidence="1">
    <location>
        <position position="197"/>
    </location>
    <ligand>
        <name>pyridoxal 5'-phosphate</name>
        <dbReference type="ChEBI" id="CHEBI:597326"/>
    </ligand>
</feature>
<feature type="binding site" evidence="1">
    <location>
        <begin position="239"/>
        <end position="240"/>
    </location>
    <ligand>
        <name>pyridoxal 5'-phosphate</name>
        <dbReference type="ChEBI" id="CHEBI:597326"/>
    </ligand>
</feature>
<feature type="modified residue" description="N6-(pyridoxal phosphate)lysine" evidence="1">
    <location>
        <position position="198"/>
    </location>
</feature>
<reference key="1">
    <citation type="journal article" date="2010" name="PLoS Genet.">
        <title>Genome sequence of the plant growth promoting endophytic bacterium Enterobacter sp. 638.</title>
        <authorList>
            <person name="Taghavi S."/>
            <person name="van der Lelie D."/>
            <person name="Hoffman A."/>
            <person name="Zhang Y.B."/>
            <person name="Walla M.D."/>
            <person name="Vangronsveld J."/>
            <person name="Newman L."/>
            <person name="Monchy S."/>
        </authorList>
    </citation>
    <scope>NUCLEOTIDE SEQUENCE [LARGE SCALE GENOMIC DNA]</scope>
    <source>
        <strain>638</strain>
    </source>
</reference>
<protein>
    <recommendedName>
        <fullName evidence="1">Phosphoserine aminotransferase</fullName>
        <ecNumber evidence="1">2.6.1.52</ecNumber>
    </recommendedName>
    <alternativeName>
        <fullName evidence="1">Phosphohydroxythreonine aminotransferase</fullName>
        <shortName evidence="1">PSAT</shortName>
    </alternativeName>
</protein>
<comment type="function">
    <text evidence="1">Catalyzes the reversible conversion of 3-phosphohydroxypyruvate to phosphoserine and of 3-hydroxy-2-oxo-4-phosphonooxybutanoate to phosphohydroxythreonine.</text>
</comment>
<comment type="catalytic activity">
    <reaction evidence="1">
        <text>O-phospho-L-serine + 2-oxoglutarate = 3-phosphooxypyruvate + L-glutamate</text>
        <dbReference type="Rhea" id="RHEA:14329"/>
        <dbReference type="ChEBI" id="CHEBI:16810"/>
        <dbReference type="ChEBI" id="CHEBI:18110"/>
        <dbReference type="ChEBI" id="CHEBI:29985"/>
        <dbReference type="ChEBI" id="CHEBI:57524"/>
        <dbReference type="EC" id="2.6.1.52"/>
    </reaction>
</comment>
<comment type="catalytic activity">
    <reaction evidence="1">
        <text>4-(phosphooxy)-L-threonine + 2-oxoglutarate = (R)-3-hydroxy-2-oxo-4-phosphooxybutanoate + L-glutamate</text>
        <dbReference type="Rhea" id="RHEA:16573"/>
        <dbReference type="ChEBI" id="CHEBI:16810"/>
        <dbReference type="ChEBI" id="CHEBI:29985"/>
        <dbReference type="ChEBI" id="CHEBI:58452"/>
        <dbReference type="ChEBI" id="CHEBI:58538"/>
        <dbReference type="EC" id="2.6.1.52"/>
    </reaction>
</comment>
<comment type="cofactor">
    <cofactor evidence="1">
        <name>pyridoxal 5'-phosphate</name>
        <dbReference type="ChEBI" id="CHEBI:597326"/>
    </cofactor>
    <text evidence="1">Binds 1 pyridoxal phosphate per subunit.</text>
</comment>
<comment type="pathway">
    <text evidence="1">Amino-acid biosynthesis; L-serine biosynthesis; L-serine from 3-phospho-D-glycerate: step 2/3.</text>
</comment>
<comment type="pathway">
    <text evidence="1">Cofactor biosynthesis; pyridoxine 5'-phosphate biosynthesis; pyridoxine 5'-phosphate from D-erythrose 4-phosphate: step 3/5.</text>
</comment>
<comment type="subunit">
    <text evidence="1">Homodimer.</text>
</comment>
<comment type="subcellular location">
    <subcellularLocation>
        <location evidence="1">Cytoplasm</location>
    </subcellularLocation>
</comment>
<comment type="similarity">
    <text evidence="1">Belongs to the class-V pyridoxal-phosphate-dependent aminotransferase family. SerC subfamily.</text>
</comment>
<sequence>MAQVFNFSSGPAMLPVDVLKQAQQELCDWQGLGTSVMEISHRGKEFIQVAEEAEKDFRDLLNIPSNYKVLFCHGGGRGQFAGIPLNLLGDKTGADYVDAGYWAASAVKEAHKYCTPNVIDAKVTVDGLRAVKPMSEWQLSDNAAYLHYCPNETIDGIAIHEEPNFGNDVVVTADLSSTILSGPLDVSRYGVIYAGAQKNIGPAGLTLVIVREDLLGKAHKACPSILDYTVLNDNDSMFNTPPTFAWYLSGLVFKWLKKNGGVAQMDKINQQKAELLYSTIDGSDFYRNDVAKANRSRMNVPFQLADSNLDKVFLEESFAAGLHALKGHRVVGGMRASIYNAMPLEGVNTLTDFMVDFERRHG</sequence>